<feature type="chain" id="PRO_0000416992" description="Serine/arginine-rich splicing factor RSZ22">
    <location>
        <begin position="1"/>
        <end position="200"/>
    </location>
</feature>
<feature type="domain" description="RRM" evidence="6">
    <location>
        <begin position="2"/>
        <end position="71"/>
    </location>
</feature>
<feature type="zinc finger region" description="CCHC-type" evidence="5">
    <location>
        <begin position="99"/>
        <end position="116"/>
    </location>
</feature>
<feature type="region of interest" description="Disordered" evidence="7">
    <location>
        <begin position="62"/>
        <end position="97"/>
    </location>
</feature>
<feature type="region of interest" description="Disordered" evidence="7">
    <location>
        <begin position="112"/>
        <end position="200"/>
    </location>
</feature>
<feature type="compositionally biased region" description="Basic and acidic residues" evidence="7">
    <location>
        <begin position="62"/>
        <end position="83"/>
    </location>
</feature>
<feature type="compositionally biased region" description="Gly residues" evidence="7">
    <location>
        <begin position="84"/>
        <end position="96"/>
    </location>
</feature>
<feature type="compositionally biased region" description="Basic residues" evidence="7">
    <location>
        <begin position="120"/>
        <end position="137"/>
    </location>
</feature>
<feature type="compositionally biased region" description="Low complexity" evidence="7">
    <location>
        <begin position="138"/>
        <end position="150"/>
    </location>
</feature>
<feature type="compositionally biased region" description="Pro residues" evidence="7">
    <location>
        <begin position="151"/>
        <end position="166"/>
    </location>
</feature>
<feature type="modified residue" description="Phosphoserine" evidence="1">
    <location>
        <position position="138"/>
    </location>
</feature>
<feature type="modified residue" description="Phosphoserine" evidence="3">
    <location>
        <position position="147"/>
    </location>
</feature>
<feature type="modified residue" description="Phosphoserine" evidence="1">
    <location>
        <position position="152"/>
    </location>
</feature>
<feature type="modified residue" description="Phosphoserine" evidence="2">
    <location>
        <position position="160"/>
    </location>
</feature>
<feature type="modified residue" description="Phosphoserine" evidence="3">
    <location>
        <position position="162"/>
    </location>
</feature>
<feature type="modified residue" description="Phosphoserine" evidence="4">
    <location>
        <position position="174"/>
    </location>
</feature>
<feature type="modified residue" description="Phosphoserine" evidence="2">
    <location>
        <position position="200"/>
    </location>
</feature>
<feature type="mutagenesis site" description="No effect on cellular localization." evidence="15">
    <original>C</original>
    <variation>S</variation>
    <location>
        <position position="101"/>
    </location>
</feature>
<feature type="mutagenesis site" description="No effect on cellular localization." evidence="15">
    <original>C</original>
    <variation>S</variation>
    <location>
        <position position="104"/>
    </location>
</feature>
<feature type="mutagenesis site" description="No effect on cellular localization." evidence="15">
    <original>H</original>
    <variation>S</variation>
    <location>
        <position position="109"/>
    </location>
</feature>
<feature type="mutagenesis site" description="No effect on cellular localization." evidence="15">
    <original>C</original>
    <variation>S</variation>
    <location>
        <position position="114"/>
    </location>
</feature>
<feature type="sequence conflict" description="In Ref. 2; CAA05352." evidence="17" ref="2">
    <original>E</original>
    <variation>A</variation>
    <location>
        <position position="67"/>
    </location>
</feature>
<feature type="sequence conflict" description="In Ref. 2; CAA05352." evidence="17" ref="2">
    <original>G</original>
    <variation>A</variation>
    <location>
        <position position="89"/>
    </location>
</feature>
<gene>
    <name type="primary">RSZ22</name>
    <name type="synonym">RSZP22</name>
    <name type="synonym">SRZ22</name>
    <name type="ordered locus">At4g31580</name>
    <name type="ORF">F28M20.230</name>
</gene>
<comment type="function">
    <text evidence="8">Sequence-specific RNA-binding protein probably involved in pre-mRNA splicing. In vitro, can complement efficiently splicing-deficient mammalian SRSF7-depleted HeLa cell extract.</text>
</comment>
<comment type="subunit">
    <text evidence="9 10 16">Component of the spliceosome. Interacts with AFC2, RS2Z33 and RNU1.</text>
</comment>
<comment type="interaction">
    <interactant intactId="EBI-1633829">
        <id>O81126</id>
    </interactant>
    <interactant intactId="EBI-1633812">
        <id>Q42404</id>
        <label>RNU1</label>
    </interactant>
    <organismsDiffer>false</organismsDiffer>
    <experiments>4</experiments>
</comment>
<comment type="subcellular location">
    <subcellularLocation>
        <location evidence="11 12 13 14 18">Nucleus speckle</location>
    </subcellularLocation>
    <subcellularLocation>
        <location evidence="11 12 13 15">Nucleus</location>
        <location evidence="11 12 13 15">Nucleolus</location>
    </subcellularLocation>
    <subcellularLocation>
        <location evidence="12 13">Nucleus</location>
        <location evidence="12 13">Nucleoplasm</location>
    </subcellularLocation>
    <subcellularLocation>
        <location evidence="13 15">Cytoplasm</location>
    </subcellularLocation>
    <text evidence="12 13 15">Shuttling between nucleolus, nucleoplasm and cytoplasm surrounding the nucleus. Nucleolus localization is dependent on phosphorylation state.</text>
</comment>
<comment type="tissue specificity">
    <text evidence="10 15 16">Expressed in primary and lateral roots, stems, petioles, abaxial and adaxial epidermis cells, trichomes, unopened flowers, anther filaments, anthers, stigma, pollen, pollen tube, ovule funiculi, integuments, embryo sac and developing seeds.</text>
</comment>
<comment type="PTM">
    <text>Extensively phosphorylated on serine residues in the RS domain. Phosphorylated by AFC2.</text>
</comment>
<comment type="similarity">
    <text evidence="17">Belongs to the splicing factor SR family. RSZ subfamily.</text>
</comment>
<accession>O81126</accession>
<accession>O23646</accession>
<keyword id="KW-0963">Cytoplasm</keyword>
<keyword id="KW-0479">Metal-binding</keyword>
<keyword id="KW-0507">mRNA processing</keyword>
<keyword id="KW-0508">mRNA splicing</keyword>
<keyword id="KW-0539">Nucleus</keyword>
<keyword id="KW-0597">Phosphoprotein</keyword>
<keyword id="KW-1185">Reference proteome</keyword>
<keyword id="KW-0747">Spliceosome</keyword>
<keyword id="KW-0862">Zinc</keyword>
<keyword id="KW-0863">Zinc-finger</keyword>
<dbReference type="EMBL" id="AF033586">
    <property type="protein sequence ID" value="AAD12769.1"/>
    <property type="molecule type" value="mRNA"/>
</dbReference>
<dbReference type="EMBL" id="AJ002378">
    <property type="protein sequence ID" value="CAA05352.1"/>
    <property type="molecule type" value="mRNA"/>
</dbReference>
<dbReference type="EMBL" id="AL031004">
    <property type="protein sequence ID" value="CAA19765.1"/>
    <property type="molecule type" value="Genomic_DNA"/>
</dbReference>
<dbReference type="EMBL" id="AL161579">
    <property type="protein sequence ID" value="CAB79876.1"/>
    <property type="molecule type" value="Genomic_DNA"/>
</dbReference>
<dbReference type="EMBL" id="CP002687">
    <property type="protein sequence ID" value="AEE85931.1"/>
    <property type="molecule type" value="Genomic_DNA"/>
</dbReference>
<dbReference type="EMBL" id="CP002687">
    <property type="protein sequence ID" value="AEE85932.1"/>
    <property type="molecule type" value="Genomic_DNA"/>
</dbReference>
<dbReference type="EMBL" id="AY065387">
    <property type="protein sequence ID" value="AAL38828.1"/>
    <property type="molecule type" value="mRNA"/>
</dbReference>
<dbReference type="EMBL" id="AY117206">
    <property type="protein sequence ID" value="AAM51281.1"/>
    <property type="molecule type" value="mRNA"/>
</dbReference>
<dbReference type="EMBL" id="AY086525">
    <property type="protein sequence ID" value="AAM63524.1"/>
    <property type="molecule type" value="mRNA"/>
</dbReference>
<dbReference type="PIR" id="T05112">
    <property type="entry name" value="T05112"/>
</dbReference>
<dbReference type="PIR" id="T52627">
    <property type="entry name" value="T52627"/>
</dbReference>
<dbReference type="RefSeq" id="NP_001078474.1">
    <property type="nucleotide sequence ID" value="NM_001085005.1"/>
</dbReference>
<dbReference type="RefSeq" id="NP_194886.1">
    <property type="nucleotide sequence ID" value="NM_119307.4"/>
</dbReference>
<dbReference type="SMR" id="O81126"/>
<dbReference type="BioGRID" id="14571">
    <property type="interactions" value="19"/>
</dbReference>
<dbReference type="FunCoup" id="O81126">
    <property type="interactions" value="3561"/>
</dbReference>
<dbReference type="IntAct" id="O81126">
    <property type="interactions" value="13"/>
</dbReference>
<dbReference type="STRING" id="3702.O81126"/>
<dbReference type="iPTMnet" id="O81126"/>
<dbReference type="PaxDb" id="3702-AT4G31580.1"/>
<dbReference type="ProteomicsDB" id="226656"/>
<dbReference type="EnsemblPlants" id="AT4G31580.1">
    <property type="protein sequence ID" value="AT4G31580.1"/>
    <property type="gene ID" value="AT4G31580"/>
</dbReference>
<dbReference type="EnsemblPlants" id="AT4G31580.2">
    <property type="protein sequence ID" value="AT4G31580.2"/>
    <property type="gene ID" value="AT4G31580"/>
</dbReference>
<dbReference type="GeneID" id="829285"/>
<dbReference type="Gramene" id="AT4G31580.1">
    <property type="protein sequence ID" value="AT4G31580.1"/>
    <property type="gene ID" value="AT4G31580"/>
</dbReference>
<dbReference type="Gramene" id="AT4G31580.2">
    <property type="protein sequence ID" value="AT4G31580.2"/>
    <property type="gene ID" value="AT4G31580"/>
</dbReference>
<dbReference type="KEGG" id="ath:AT4G31580"/>
<dbReference type="Araport" id="AT4G31580"/>
<dbReference type="TAIR" id="AT4G31580">
    <property type="gene designation" value="RSZ22"/>
</dbReference>
<dbReference type="eggNOG" id="KOG0107">
    <property type="taxonomic scope" value="Eukaryota"/>
</dbReference>
<dbReference type="HOGENOM" id="CLU_012062_20_1_1"/>
<dbReference type="InParanoid" id="O81126"/>
<dbReference type="OMA" id="HGPLNCK"/>
<dbReference type="OrthoDB" id="5970at2759"/>
<dbReference type="PhylomeDB" id="O81126"/>
<dbReference type="CD-CODE" id="4299E36E">
    <property type="entry name" value="Nucleolus"/>
</dbReference>
<dbReference type="PRO" id="PR:O81126"/>
<dbReference type="Proteomes" id="UP000006548">
    <property type="component" value="Chromosome 4"/>
</dbReference>
<dbReference type="ExpressionAtlas" id="O81126">
    <property type="expression patterns" value="baseline and differential"/>
</dbReference>
<dbReference type="GO" id="GO:0005737">
    <property type="term" value="C:cytoplasm"/>
    <property type="evidence" value="ECO:0007669"/>
    <property type="project" value="UniProtKB-SubCell"/>
</dbReference>
<dbReference type="GO" id="GO:0016607">
    <property type="term" value="C:nuclear speck"/>
    <property type="evidence" value="ECO:0000314"/>
    <property type="project" value="TAIR"/>
</dbReference>
<dbReference type="GO" id="GO:0005730">
    <property type="term" value="C:nucleolus"/>
    <property type="evidence" value="ECO:0000314"/>
    <property type="project" value="TAIR"/>
</dbReference>
<dbReference type="GO" id="GO:0005886">
    <property type="term" value="C:plasma membrane"/>
    <property type="evidence" value="ECO:0007005"/>
    <property type="project" value="TAIR"/>
</dbReference>
<dbReference type="GO" id="GO:0005681">
    <property type="term" value="C:spliceosomal complex"/>
    <property type="evidence" value="ECO:0007669"/>
    <property type="project" value="UniProtKB-KW"/>
</dbReference>
<dbReference type="GO" id="GO:0003729">
    <property type="term" value="F:mRNA binding"/>
    <property type="evidence" value="ECO:0000314"/>
    <property type="project" value="TAIR"/>
</dbReference>
<dbReference type="GO" id="GO:0008270">
    <property type="term" value="F:zinc ion binding"/>
    <property type="evidence" value="ECO:0007669"/>
    <property type="project" value="UniProtKB-KW"/>
</dbReference>
<dbReference type="GO" id="GO:0000398">
    <property type="term" value="P:mRNA splicing, via spliceosome"/>
    <property type="evidence" value="ECO:0000304"/>
    <property type="project" value="TAIR"/>
</dbReference>
<dbReference type="GO" id="GO:0008380">
    <property type="term" value="P:RNA splicing"/>
    <property type="evidence" value="ECO:0000303"/>
    <property type="project" value="TAIR"/>
</dbReference>
<dbReference type="CDD" id="cd12373">
    <property type="entry name" value="RRM_SRSF3_like"/>
    <property type="match status" value="1"/>
</dbReference>
<dbReference type="FunFam" id="3.30.70.330:FF:000214">
    <property type="entry name" value="Serine/arginine-rich splicing factor 7"/>
    <property type="match status" value="1"/>
</dbReference>
<dbReference type="FunFam" id="4.10.60.10:FF:000029">
    <property type="entry name" value="Serine/arginine-rich splicing factor RSZ22A"/>
    <property type="match status" value="1"/>
</dbReference>
<dbReference type="Gene3D" id="3.30.70.330">
    <property type="match status" value="1"/>
</dbReference>
<dbReference type="Gene3D" id="4.10.60.10">
    <property type="entry name" value="Zinc finger, CCHC-type"/>
    <property type="match status" value="1"/>
</dbReference>
<dbReference type="InterPro" id="IPR012677">
    <property type="entry name" value="Nucleotide-bd_a/b_plait_sf"/>
</dbReference>
<dbReference type="InterPro" id="IPR035979">
    <property type="entry name" value="RBD_domain_sf"/>
</dbReference>
<dbReference type="InterPro" id="IPR000504">
    <property type="entry name" value="RRM_dom"/>
</dbReference>
<dbReference type="InterPro" id="IPR050907">
    <property type="entry name" value="SRSF"/>
</dbReference>
<dbReference type="InterPro" id="IPR001878">
    <property type="entry name" value="Znf_CCHC"/>
</dbReference>
<dbReference type="InterPro" id="IPR036875">
    <property type="entry name" value="Znf_CCHC_sf"/>
</dbReference>
<dbReference type="PANTHER" id="PTHR23147">
    <property type="entry name" value="SERINE/ARGININE RICH SPLICING FACTOR"/>
    <property type="match status" value="1"/>
</dbReference>
<dbReference type="Pfam" id="PF00076">
    <property type="entry name" value="RRM_1"/>
    <property type="match status" value="1"/>
</dbReference>
<dbReference type="Pfam" id="PF00098">
    <property type="entry name" value="zf-CCHC"/>
    <property type="match status" value="1"/>
</dbReference>
<dbReference type="SMART" id="SM00360">
    <property type="entry name" value="RRM"/>
    <property type="match status" value="1"/>
</dbReference>
<dbReference type="SMART" id="SM00343">
    <property type="entry name" value="ZnF_C2HC"/>
    <property type="match status" value="1"/>
</dbReference>
<dbReference type="SUPFAM" id="SSF57756">
    <property type="entry name" value="Retrovirus zinc finger-like domains"/>
    <property type="match status" value="1"/>
</dbReference>
<dbReference type="SUPFAM" id="SSF54928">
    <property type="entry name" value="RNA-binding domain, RBD"/>
    <property type="match status" value="1"/>
</dbReference>
<dbReference type="PROSITE" id="PS50102">
    <property type="entry name" value="RRM"/>
    <property type="match status" value="1"/>
</dbReference>
<dbReference type="PROSITE" id="PS50158">
    <property type="entry name" value="ZF_CCHC"/>
    <property type="match status" value="1"/>
</dbReference>
<name>RSZ22_ARATH</name>
<reference key="1">
    <citation type="journal article" date="1998" name="Plant Cell">
        <title>The plant U1 small nuclear ribonucleoprotein particle 70K protein interacts with two novel serine/arginine-rich proteins.</title>
        <authorList>
            <person name="Golovkin M."/>
            <person name="Reddy A.S."/>
        </authorList>
    </citation>
    <scope>NUCLEOTIDE SEQUENCE [MRNA]</scope>
    <scope>INTERACTION WITH RNU1</scope>
    <scope>TISSUE SPECIFICITY</scope>
</reference>
<reference key="2">
    <citation type="journal article" date="1999" name="Plant Mol. Biol.">
        <title>A novel family of plant splicing factors with a Zn knuckle motif: examination of RNA binding and splicing activities.</title>
        <authorList>
            <person name="Lopato S."/>
            <person name="Gattoni R."/>
            <person name="Fabini G."/>
            <person name="Stevenin J."/>
            <person name="Barta A."/>
        </authorList>
    </citation>
    <scope>NUCLEOTIDE SEQUENCE [MRNA]</scope>
    <scope>FUNCTION</scope>
    <source>
        <strain>cv. Columbia</strain>
    </source>
</reference>
<reference key="3">
    <citation type="journal article" date="1999" name="Nature">
        <title>Sequence and analysis of chromosome 4 of the plant Arabidopsis thaliana.</title>
        <authorList>
            <person name="Mayer K.F.X."/>
            <person name="Schueller C."/>
            <person name="Wambutt R."/>
            <person name="Murphy G."/>
            <person name="Volckaert G."/>
            <person name="Pohl T."/>
            <person name="Duesterhoeft A."/>
            <person name="Stiekema W."/>
            <person name="Entian K.-D."/>
            <person name="Terryn N."/>
            <person name="Harris B."/>
            <person name="Ansorge W."/>
            <person name="Brandt P."/>
            <person name="Grivell L.A."/>
            <person name="Rieger M."/>
            <person name="Weichselgartner M."/>
            <person name="de Simone V."/>
            <person name="Obermaier B."/>
            <person name="Mache R."/>
            <person name="Mueller M."/>
            <person name="Kreis M."/>
            <person name="Delseny M."/>
            <person name="Puigdomenech P."/>
            <person name="Watson M."/>
            <person name="Schmidtheini T."/>
            <person name="Reichert B."/>
            <person name="Portetelle D."/>
            <person name="Perez-Alonso M."/>
            <person name="Boutry M."/>
            <person name="Bancroft I."/>
            <person name="Vos P."/>
            <person name="Hoheisel J."/>
            <person name="Zimmermann W."/>
            <person name="Wedler H."/>
            <person name="Ridley P."/>
            <person name="Langham S.-A."/>
            <person name="McCullagh B."/>
            <person name="Bilham L."/>
            <person name="Robben J."/>
            <person name="van der Schueren J."/>
            <person name="Grymonprez B."/>
            <person name="Chuang Y.-J."/>
            <person name="Vandenbussche F."/>
            <person name="Braeken M."/>
            <person name="Weltjens I."/>
            <person name="Voet M."/>
            <person name="Bastiaens I."/>
            <person name="Aert R."/>
            <person name="Defoor E."/>
            <person name="Weitzenegger T."/>
            <person name="Bothe G."/>
            <person name="Ramsperger U."/>
            <person name="Hilbert H."/>
            <person name="Braun M."/>
            <person name="Holzer E."/>
            <person name="Brandt A."/>
            <person name="Peters S."/>
            <person name="van Staveren M."/>
            <person name="Dirkse W."/>
            <person name="Mooijman P."/>
            <person name="Klein Lankhorst R."/>
            <person name="Rose M."/>
            <person name="Hauf J."/>
            <person name="Koetter P."/>
            <person name="Berneiser S."/>
            <person name="Hempel S."/>
            <person name="Feldpausch M."/>
            <person name="Lamberth S."/>
            <person name="Van den Daele H."/>
            <person name="De Keyser A."/>
            <person name="Buysshaert C."/>
            <person name="Gielen J."/>
            <person name="Villarroel R."/>
            <person name="De Clercq R."/>
            <person name="van Montagu M."/>
            <person name="Rogers J."/>
            <person name="Cronin A."/>
            <person name="Quail M.A."/>
            <person name="Bray-Allen S."/>
            <person name="Clark L."/>
            <person name="Doggett J."/>
            <person name="Hall S."/>
            <person name="Kay M."/>
            <person name="Lennard N."/>
            <person name="McLay K."/>
            <person name="Mayes R."/>
            <person name="Pettett A."/>
            <person name="Rajandream M.A."/>
            <person name="Lyne M."/>
            <person name="Benes V."/>
            <person name="Rechmann S."/>
            <person name="Borkova D."/>
            <person name="Bloecker H."/>
            <person name="Scharfe M."/>
            <person name="Grimm M."/>
            <person name="Loehnert T.-H."/>
            <person name="Dose S."/>
            <person name="de Haan M."/>
            <person name="Maarse A.C."/>
            <person name="Schaefer M."/>
            <person name="Mueller-Auer S."/>
            <person name="Gabel C."/>
            <person name="Fuchs M."/>
            <person name="Fartmann B."/>
            <person name="Granderath K."/>
            <person name="Dauner D."/>
            <person name="Herzl A."/>
            <person name="Neumann S."/>
            <person name="Argiriou A."/>
            <person name="Vitale D."/>
            <person name="Liguori R."/>
            <person name="Piravandi E."/>
            <person name="Massenet O."/>
            <person name="Quigley F."/>
            <person name="Clabauld G."/>
            <person name="Muendlein A."/>
            <person name="Felber R."/>
            <person name="Schnabl S."/>
            <person name="Hiller R."/>
            <person name="Schmidt W."/>
            <person name="Lecharny A."/>
            <person name="Aubourg S."/>
            <person name="Chefdor F."/>
            <person name="Cooke R."/>
            <person name="Berger C."/>
            <person name="Monfort A."/>
            <person name="Casacuberta E."/>
            <person name="Gibbons T."/>
            <person name="Weber N."/>
            <person name="Vandenbol M."/>
            <person name="Bargues M."/>
            <person name="Terol J."/>
            <person name="Torres A."/>
            <person name="Perez-Perez A."/>
            <person name="Purnelle B."/>
            <person name="Bent E."/>
            <person name="Johnson S."/>
            <person name="Tacon D."/>
            <person name="Jesse T."/>
            <person name="Heijnen L."/>
            <person name="Schwarz S."/>
            <person name="Scholler P."/>
            <person name="Heber S."/>
            <person name="Francs P."/>
            <person name="Bielke C."/>
            <person name="Frishman D."/>
            <person name="Haase D."/>
            <person name="Lemcke K."/>
            <person name="Mewes H.-W."/>
            <person name="Stocker S."/>
            <person name="Zaccaria P."/>
            <person name="Bevan M."/>
            <person name="Wilson R.K."/>
            <person name="de la Bastide M."/>
            <person name="Habermann K."/>
            <person name="Parnell L."/>
            <person name="Dedhia N."/>
            <person name="Gnoj L."/>
            <person name="Schutz K."/>
            <person name="Huang E."/>
            <person name="Spiegel L."/>
            <person name="Sekhon M."/>
            <person name="Murray J."/>
            <person name="Sheet P."/>
            <person name="Cordes M."/>
            <person name="Abu-Threideh J."/>
            <person name="Stoneking T."/>
            <person name="Kalicki J."/>
            <person name="Graves T."/>
            <person name="Harmon G."/>
            <person name="Edwards J."/>
            <person name="Latreille P."/>
            <person name="Courtney L."/>
            <person name="Cloud J."/>
            <person name="Abbott A."/>
            <person name="Scott K."/>
            <person name="Johnson D."/>
            <person name="Minx P."/>
            <person name="Bentley D."/>
            <person name="Fulton B."/>
            <person name="Miller N."/>
            <person name="Greco T."/>
            <person name="Kemp K."/>
            <person name="Kramer J."/>
            <person name="Fulton L."/>
            <person name="Mardis E."/>
            <person name="Dante M."/>
            <person name="Pepin K."/>
            <person name="Hillier L.W."/>
            <person name="Nelson J."/>
            <person name="Spieth J."/>
            <person name="Ryan E."/>
            <person name="Andrews S."/>
            <person name="Geisel C."/>
            <person name="Layman D."/>
            <person name="Du H."/>
            <person name="Ali J."/>
            <person name="Berghoff A."/>
            <person name="Jones K."/>
            <person name="Drone K."/>
            <person name="Cotton M."/>
            <person name="Joshu C."/>
            <person name="Antonoiu B."/>
            <person name="Zidanic M."/>
            <person name="Strong C."/>
            <person name="Sun H."/>
            <person name="Lamar B."/>
            <person name="Yordan C."/>
            <person name="Ma P."/>
            <person name="Zhong J."/>
            <person name="Preston R."/>
            <person name="Vil D."/>
            <person name="Shekher M."/>
            <person name="Matero A."/>
            <person name="Shah R."/>
            <person name="Swaby I.K."/>
            <person name="O'Shaughnessy A."/>
            <person name="Rodriguez M."/>
            <person name="Hoffman J."/>
            <person name="Till S."/>
            <person name="Granat S."/>
            <person name="Shohdy N."/>
            <person name="Hasegawa A."/>
            <person name="Hameed A."/>
            <person name="Lodhi M."/>
            <person name="Johnson A."/>
            <person name="Chen E."/>
            <person name="Marra M.A."/>
            <person name="Martienssen R."/>
            <person name="McCombie W.R."/>
        </authorList>
    </citation>
    <scope>NUCLEOTIDE SEQUENCE [LARGE SCALE GENOMIC DNA]</scope>
    <source>
        <strain>cv. Columbia</strain>
    </source>
</reference>
<reference key="4">
    <citation type="journal article" date="2017" name="Plant J.">
        <title>Araport11: a complete reannotation of the Arabidopsis thaliana reference genome.</title>
        <authorList>
            <person name="Cheng C.Y."/>
            <person name="Krishnakumar V."/>
            <person name="Chan A.P."/>
            <person name="Thibaud-Nissen F."/>
            <person name="Schobel S."/>
            <person name="Town C.D."/>
        </authorList>
    </citation>
    <scope>GENOME REANNOTATION</scope>
    <source>
        <strain>cv. Columbia</strain>
    </source>
</reference>
<reference key="5">
    <citation type="journal article" date="2003" name="Science">
        <title>Empirical analysis of transcriptional activity in the Arabidopsis genome.</title>
        <authorList>
            <person name="Yamada K."/>
            <person name="Lim J."/>
            <person name="Dale J.M."/>
            <person name="Chen H."/>
            <person name="Shinn P."/>
            <person name="Palm C.J."/>
            <person name="Southwick A.M."/>
            <person name="Wu H.C."/>
            <person name="Kim C.J."/>
            <person name="Nguyen M."/>
            <person name="Pham P.K."/>
            <person name="Cheuk R.F."/>
            <person name="Karlin-Newmann G."/>
            <person name="Liu S.X."/>
            <person name="Lam B."/>
            <person name="Sakano H."/>
            <person name="Wu T."/>
            <person name="Yu G."/>
            <person name="Miranda M."/>
            <person name="Quach H.L."/>
            <person name="Tripp M."/>
            <person name="Chang C.H."/>
            <person name="Lee J.M."/>
            <person name="Toriumi M.J."/>
            <person name="Chan M.M."/>
            <person name="Tang C.C."/>
            <person name="Onodera C.S."/>
            <person name="Deng J.M."/>
            <person name="Akiyama K."/>
            <person name="Ansari Y."/>
            <person name="Arakawa T."/>
            <person name="Banh J."/>
            <person name="Banno F."/>
            <person name="Bowser L."/>
            <person name="Brooks S.Y."/>
            <person name="Carninci P."/>
            <person name="Chao Q."/>
            <person name="Choy N."/>
            <person name="Enju A."/>
            <person name="Goldsmith A.D."/>
            <person name="Gurjal M."/>
            <person name="Hansen N.F."/>
            <person name="Hayashizaki Y."/>
            <person name="Johnson-Hopson C."/>
            <person name="Hsuan V.W."/>
            <person name="Iida K."/>
            <person name="Karnes M."/>
            <person name="Khan S."/>
            <person name="Koesema E."/>
            <person name="Ishida J."/>
            <person name="Jiang P.X."/>
            <person name="Jones T."/>
            <person name="Kawai J."/>
            <person name="Kamiya A."/>
            <person name="Meyers C."/>
            <person name="Nakajima M."/>
            <person name="Narusaka M."/>
            <person name="Seki M."/>
            <person name="Sakurai T."/>
            <person name="Satou M."/>
            <person name="Tamse R."/>
            <person name="Vaysberg M."/>
            <person name="Wallender E.K."/>
            <person name="Wong C."/>
            <person name="Yamamura Y."/>
            <person name="Yuan S."/>
            <person name="Shinozaki K."/>
            <person name="Davis R.W."/>
            <person name="Theologis A."/>
            <person name="Ecker J.R."/>
        </authorList>
    </citation>
    <scope>NUCLEOTIDE SEQUENCE [LARGE SCALE MRNA]</scope>
    <source>
        <strain>cv. Columbia</strain>
    </source>
</reference>
<reference key="6">
    <citation type="submission" date="2002-03" db="EMBL/GenBank/DDBJ databases">
        <title>Full-length cDNA from Arabidopsis thaliana.</title>
        <authorList>
            <person name="Brover V.V."/>
            <person name="Troukhan M.E."/>
            <person name="Alexandrov N.A."/>
            <person name="Lu Y.-P."/>
            <person name="Flavell R.B."/>
            <person name="Feldmann K.A."/>
        </authorList>
    </citation>
    <scope>NUCLEOTIDE SEQUENCE [LARGE SCALE MRNA]</scope>
</reference>
<reference key="7">
    <citation type="journal article" date="1999" name="J. Biol. Chem.">
        <title>An SC35-like protein and a novel serine/arginine-rich protein interact with Arabidopsis U1-70K protein.</title>
        <authorList>
            <person name="Golovkin M."/>
            <person name="Reddy A.S.N."/>
        </authorList>
    </citation>
    <scope>INTERACTION WITH AFC2</scope>
</reference>
<reference key="8">
    <citation type="journal article" date="2002" name="J. Biol. Chem.">
        <title>Network of interactions of a novel plant-specific Arg/Ser-rich protein, atRSZ33, with atSC35-like splicing factors.</title>
        <authorList>
            <person name="Lopato S."/>
            <person name="Forstner C."/>
            <person name="Kalyna M."/>
            <person name="Hilscher J."/>
            <person name="Langhammer U."/>
            <person name="Korakod L."/>
            <person name="Zdravko J."/>
            <person name="Barta A."/>
        </authorList>
    </citation>
    <scope>SUBCELLULAR LOCATION</scope>
    <scope>TISSUE SPECIFICITY</scope>
    <scope>INTERACTION WITH RS2Z33</scope>
</reference>
<reference key="9">
    <citation type="journal article" date="2004" name="Mol. Biol. Cell">
        <title>Use of fluorescent protein tags to study nuclear organization of the spliceosomal machinery in transiently transformed living plant cells.</title>
        <authorList>
            <person name="Lorkovic Z.J."/>
            <person name="Hilscher J."/>
            <person name="Barta A."/>
        </authorList>
    </citation>
    <scope>SUBCELLULAR LOCATION</scope>
</reference>
<reference key="10">
    <citation type="journal article" date="2005" name="Plant J.">
        <title>Functional distribution and dynamics of Arabidopsis SR splicing factors in living plant cells.</title>
        <authorList>
            <person name="Tillemans V."/>
            <person name="Dispa L."/>
            <person name="Remacle C."/>
            <person name="Collinge M."/>
            <person name="Motte P."/>
        </authorList>
    </citation>
    <scope>SUBCELLULAR LOCATION</scope>
</reference>
<reference key="11">
    <citation type="journal article" date="2006" name="Plant Cell">
        <title>Insights into nuclear organization in plants as revealed by the dynamic distribution of Arabidopsis SR splicing factors.</title>
        <authorList>
            <person name="Tillemans V."/>
            <person name="Leponce I."/>
            <person name="Rausin G."/>
            <person name="Dispa L."/>
            <person name="Motte P."/>
        </authorList>
    </citation>
    <scope>SUBCELLULAR LOCATION</scope>
</reference>
<reference key="12">
    <citation type="journal article" date="2008" name="Exp. Cell Res.">
        <title>Co-localisation studies of Arabidopsis SR splicing factors reveal different types of speckles in plant cell nuclei.</title>
        <authorList>
            <person name="Lorkovic Z.J."/>
            <person name="Hilscher J."/>
            <person name="Barta A."/>
        </authorList>
    </citation>
    <scope>SUBCELLULAR LOCATION</scope>
</reference>
<reference key="13">
    <citation type="journal article" date="2010" name="Plant Cell">
        <title>Implementing a rational and consistent nomenclature for serine/arginine-rich protein splicing factors (SR proteins) in plants.</title>
        <authorList>
            <person name="Barta A."/>
            <person name="Kalyna M."/>
            <person name="Reddy A.S."/>
        </authorList>
    </citation>
    <scope>GENE FAMILY</scope>
    <scope>NOMENCLATURE</scope>
</reference>
<reference key="14">
    <citation type="journal article" date="2010" name="Plant Physiol.">
        <title>Dynamic nucleocytoplasmic shuttling of an Arabidopsis SR splicing factor: role of the RNA-binding domains.</title>
        <authorList>
            <person name="Rausin G."/>
            <person name="Tillemans V."/>
            <person name="Stankovic N."/>
            <person name="Hanikenne M."/>
            <person name="Motte P."/>
        </authorList>
    </citation>
    <scope>SUBCELLULAR LOCATION</scope>
    <scope>TISSUE SPECIFICITY</scope>
    <scope>MUTAGENESIS OF CYS-101; CYS-104; HIS-109 AND CYS-114</scope>
</reference>
<reference key="15">
    <citation type="journal article" date="2011" name="PLoS ONE">
        <title>Comparative analysis of serine/arginine-rich proteins across 27 eukaryotes: insights into sub-family classification and extent of alternative splicing.</title>
        <authorList>
            <person name="Richardson D.N."/>
            <person name="Rogers M.F."/>
            <person name="Labadorf A."/>
            <person name="Ben-Hur A."/>
            <person name="Guo H."/>
            <person name="Paterson A.H."/>
            <person name="Reddy A.S.N."/>
        </authorList>
    </citation>
    <scope>GENE FAMILY</scope>
</reference>
<reference key="16">
    <citation type="journal article" date="2013" name="Plant Cell">
        <title>CYCLIN-DEPENDENT KINASE G1 is associated with the spliceosome to regulate CALLOSE SYNTHASE5 splicing and pollen wall formation in Arabidopsis.</title>
        <authorList>
            <person name="Huang X.Y."/>
            <person name="Niu J."/>
            <person name="Sun M.X."/>
            <person name="Zhu J."/>
            <person name="Gao J.F."/>
            <person name="Yang J."/>
            <person name="Zhou Q."/>
            <person name="Yang Z.N."/>
        </authorList>
    </citation>
    <scope>IDENTIFICATION OF THE SPLICEOSOME COMPLEX</scope>
</reference>
<sequence>MSRVYVGNLDPRVTERELEDEFRAFGVVRSVWVARRPPGYAFLDFEDPRDARDAIRALDGKNGWRVEQSHNRGERGGGGRGGDRGGGGGGRGGRGGSDLKCYECGETGHFARECRNRGGTGRRRSKSRSRTPPRYRRSPSYGRRSYSPRARSPPPPRRRSPSPPPARGRSYSRSPPPYRAREEVPYANGNGLKERRRSRS</sequence>
<protein>
    <recommendedName>
        <fullName>Serine/arginine-rich splicing factor RSZ22</fullName>
    </recommendedName>
    <alternativeName>
        <fullName>RS-containing zinc finger protein 22</fullName>
        <shortName>At-RSZ22</shortName>
        <shortName>At-RSZp22</shortName>
        <shortName>AtRSZ22</shortName>
    </alternativeName>
</protein>
<organism>
    <name type="scientific">Arabidopsis thaliana</name>
    <name type="common">Mouse-ear cress</name>
    <dbReference type="NCBI Taxonomy" id="3702"/>
    <lineage>
        <taxon>Eukaryota</taxon>
        <taxon>Viridiplantae</taxon>
        <taxon>Streptophyta</taxon>
        <taxon>Embryophyta</taxon>
        <taxon>Tracheophyta</taxon>
        <taxon>Spermatophyta</taxon>
        <taxon>Magnoliopsida</taxon>
        <taxon>eudicotyledons</taxon>
        <taxon>Gunneridae</taxon>
        <taxon>Pentapetalae</taxon>
        <taxon>rosids</taxon>
        <taxon>malvids</taxon>
        <taxon>Brassicales</taxon>
        <taxon>Brassicaceae</taxon>
        <taxon>Camelineae</taxon>
        <taxon>Arabidopsis</taxon>
    </lineage>
</organism>
<evidence type="ECO:0000250" key="1">
    <source>
        <dbReference type="UniProtKB" id="P92964"/>
    </source>
</evidence>
<evidence type="ECO:0000250" key="2">
    <source>
        <dbReference type="UniProtKB" id="P92966"/>
    </source>
</evidence>
<evidence type="ECO:0000250" key="3">
    <source>
        <dbReference type="UniProtKB" id="Q8VYA5"/>
    </source>
</evidence>
<evidence type="ECO:0000250" key="4">
    <source>
        <dbReference type="UniProtKB" id="Q9SJA6"/>
    </source>
</evidence>
<evidence type="ECO:0000255" key="5">
    <source>
        <dbReference type="PROSITE-ProRule" id="PRU00047"/>
    </source>
</evidence>
<evidence type="ECO:0000255" key="6">
    <source>
        <dbReference type="PROSITE-ProRule" id="PRU00176"/>
    </source>
</evidence>
<evidence type="ECO:0000256" key="7">
    <source>
        <dbReference type="SAM" id="MobiDB-lite"/>
    </source>
</evidence>
<evidence type="ECO:0000269" key="8">
    <source>
    </source>
</evidence>
<evidence type="ECO:0000269" key="9">
    <source>
    </source>
</evidence>
<evidence type="ECO:0000269" key="10">
    <source>
    </source>
</evidence>
<evidence type="ECO:0000269" key="11">
    <source>
    </source>
</evidence>
<evidence type="ECO:0000269" key="12">
    <source>
    </source>
</evidence>
<evidence type="ECO:0000269" key="13">
    <source>
    </source>
</evidence>
<evidence type="ECO:0000269" key="14">
    <source>
    </source>
</evidence>
<evidence type="ECO:0000269" key="15">
    <source>
    </source>
</evidence>
<evidence type="ECO:0000269" key="16">
    <source>
    </source>
</evidence>
<evidence type="ECO:0000305" key="17"/>
<evidence type="ECO:0000305" key="18">
    <source>
    </source>
</evidence>
<proteinExistence type="evidence at protein level"/>